<dbReference type="EC" id="6.3.4.16" evidence="2"/>
<dbReference type="EC" id="6.3.5.5" evidence="2"/>
<dbReference type="EMBL" id="AE016815">
    <property type="protein sequence ID" value="AAS50929.2"/>
    <property type="molecule type" value="Genomic_DNA"/>
</dbReference>
<dbReference type="RefSeq" id="NP_983105.2">
    <property type="nucleotide sequence ID" value="NM_208458.2"/>
</dbReference>
<dbReference type="SMR" id="Q75D66"/>
<dbReference type="FunCoup" id="Q75D66">
    <property type="interactions" value="479"/>
</dbReference>
<dbReference type="STRING" id="284811.Q75D66"/>
<dbReference type="EnsemblFungi" id="AAS50929">
    <property type="protein sequence ID" value="AAS50929"/>
    <property type="gene ID" value="AGOS_ABR157W"/>
</dbReference>
<dbReference type="GeneID" id="4619215"/>
<dbReference type="KEGG" id="ago:AGOS_ABR157W"/>
<dbReference type="eggNOG" id="KOG0370">
    <property type="taxonomic scope" value="Eukaryota"/>
</dbReference>
<dbReference type="HOGENOM" id="CLU_000513_1_3_1"/>
<dbReference type="InParanoid" id="Q75D66"/>
<dbReference type="OMA" id="FPFNKFP"/>
<dbReference type="OrthoDB" id="1924069at2759"/>
<dbReference type="UniPathway" id="UPA00068">
    <property type="reaction ID" value="UER00171"/>
</dbReference>
<dbReference type="Proteomes" id="UP000000591">
    <property type="component" value="Chromosome II"/>
</dbReference>
<dbReference type="GO" id="GO:0005951">
    <property type="term" value="C:carbamoyl-phosphate synthase complex"/>
    <property type="evidence" value="ECO:0007669"/>
    <property type="project" value="EnsemblFungi"/>
</dbReference>
<dbReference type="GO" id="GO:0005737">
    <property type="term" value="C:cytoplasm"/>
    <property type="evidence" value="ECO:0000318"/>
    <property type="project" value="GO_Central"/>
</dbReference>
<dbReference type="GO" id="GO:0005524">
    <property type="term" value="F:ATP binding"/>
    <property type="evidence" value="ECO:0007669"/>
    <property type="project" value="UniProtKB-KW"/>
</dbReference>
<dbReference type="GO" id="GO:0004087">
    <property type="term" value="F:carbamoyl-phosphate synthase (ammonia) activity"/>
    <property type="evidence" value="ECO:0000318"/>
    <property type="project" value="GO_Central"/>
</dbReference>
<dbReference type="GO" id="GO:0004088">
    <property type="term" value="F:carbamoyl-phosphate synthase (glutamine-hydrolyzing) activity"/>
    <property type="evidence" value="ECO:0007669"/>
    <property type="project" value="UniProtKB-EC"/>
</dbReference>
<dbReference type="GO" id="GO:0046872">
    <property type="term" value="F:metal ion binding"/>
    <property type="evidence" value="ECO:0007669"/>
    <property type="project" value="UniProtKB-KW"/>
</dbReference>
<dbReference type="GO" id="GO:0006526">
    <property type="term" value="P:L-arginine biosynthetic process"/>
    <property type="evidence" value="ECO:0000318"/>
    <property type="project" value="GO_Central"/>
</dbReference>
<dbReference type="GO" id="GO:0006221">
    <property type="term" value="P:pyrimidine nucleotide biosynthetic process"/>
    <property type="evidence" value="ECO:0007669"/>
    <property type="project" value="EnsemblFungi"/>
</dbReference>
<dbReference type="FunFam" id="3.40.50.1380:FF:000015">
    <property type="entry name" value="Carbamoyl-phosphate synthase arginine-specific large chain"/>
    <property type="match status" value="1"/>
</dbReference>
<dbReference type="FunFam" id="1.10.1030.10:FF:000001">
    <property type="entry name" value="Carbamoyl-phosphate synthase large chain"/>
    <property type="match status" value="1"/>
</dbReference>
<dbReference type="FunFam" id="3.30.1490.20:FF:000001">
    <property type="entry name" value="Carbamoyl-phosphate synthase large chain"/>
    <property type="match status" value="1"/>
</dbReference>
<dbReference type="FunFam" id="3.30.470.20:FF:000001">
    <property type="entry name" value="Carbamoyl-phosphate synthase large chain"/>
    <property type="match status" value="1"/>
</dbReference>
<dbReference type="FunFam" id="3.30.470.20:FF:000026">
    <property type="entry name" value="Carbamoyl-phosphate synthase large chain"/>
    <property type="match status" value="1"/>
</dbReference>
<dbReference type="FunFam" id="3.40.50.20:FF:000001">
    <property type="entry name" value="Carbamoyl-phosphate synthase large chain"/>
    <property type="match status" value="1"/>
</dbReference>
<dbReference type="FunFam" id="3.40.50.20:FF:000002">
    <property type="entry name" value="Carbamoyl-phosphate synthase large chain"/>
    <property type="match status" value="1"/>
</dbReference>
<dbReference type="Gene3D" id="3.40.50.20">
    <property type="match status" value="2"/>
</dbReference>
<dbReference type="Gene3D" id="3.30.1490.20">
    <property type="entry name" value="ATP-grasp fold, A domain"/>
    <property type="match status" value="1"/>
</dbReference>
<dbReference type="Gene3D" id="3.30.470.20">
    <property type="entry name" value="ATP-grasp fold, B domain"/>
    <property type="match status" value="2"/>
</dbReference>
<dbReference type="Gene3D" id="1.10.1030.10">
    <property type="entry name" value="Carbamoyl-phosphate synthetase, large subunit oligomerisation domain"/>
    <property type="match status" value="1"/>
</dbReference>
<dbReference type="Gene3D" id="3.40.50.1380">
    <property type="entry name" value="Methylglyoxal synthase-like domain"/>
    <property type="match status" value="1"/>
</dbReference>
<dbReference type="InterPro" id="IPR011761">
    <property type="entry name" value="ATP-grasp"/>
</dbReference>
<dbReference type="InterPro" id="IPR013815">
    <property type="entry name" value="ATP_grasp_subdomain_1"/>
</dbReference>
<dbReference type="InterPro" id="IPR006275">
    <property type="entry name" value="CarbamoylP_synth_lsu"/>
</dbReference>
<dbReference type="InterPro" id="IPR005480">
    <property type="entry name" value="CarbamoylP_synth_lsu_oligo"/>
</dbReference>
<dbReference type="InterPro" id="IPR036897">
    <property type="entry name" value="CarbamoylP_synth_lsu_oligo_sf"/>
</dbReference>
<dbReference type="InterPro" id="IPR005479">
    <property type="entry name" value="CbamoylP_synth_lsu-like_ATP-bd"/>
</dbReference>
<dbReference type="InterPro" id="IPR005483">
    <property type="entry name" value="CbamoylP_synth_lsu_CPSase_dom"/>
</dbReference>
<dbReference type="InterPro" id="IPR011607">
    <property type="entry name" value="MGS-like_dom"/>
</dbReference>
<dbReference type="InterPro" id="IPR036914">
    <property type="entry name" value="MGS-like_dom_sf"/>
</dbReference>
<dbReference type="InterPro" id="IPR016185">
    <property type="entry name" value="PreATP-grasp_dom_sf"/>
</dbReference>
<dbReference type="NCBIfam" id="TIGR01369">
    <property type="entry name" value="CPSaseII_lrg"/>
    <property type="match status" value="1"/>
</dbReference>
<dbReference type="NCBIfam" id="NF003671">
    <property type="entry name" value="PRK05294.1"/>
    <property type="match status" value="1"/>
</dbReference>
<dbReference type="NCBIfam" id="NF009455">
    <property type="entry name" value="PRK12815.1"/>
    <property type="match status" value="1"/>
</dbReference>
<dbReference type="PANTHER" id="PTHR11405:SF53">
    <property type="entry name" value="CARBAMOYL-PHOSPHATE SYNTHASE [AMMONIA], MITOCHONDRIAL"/>
    <property type="match status" value="1"/>
</dbReference>
<dbReference type="PANTHER" id="PTHR11405">
    <property type="entry name" value="CARBAMOYLTRANSFERASE FAMILY MEMBER"/>
    <property type="match status" value="1"/>
</dbReference>
<dbReference type="Pfam" id="PF02786">
    <property type="entry name" value="CPSase_L_D2"/>
    <property type="match status" value="2"/>
</dbReference>
<dbReference type="Pfam" id="PF02787">
    <property type="entry name" value="CPSase_L_D3"/>
    <property type="match status" value="1"/>
</dbReference>
<dbReference type="PRINTS" id="PR00098">
    <property type="entry name" value="CPSASE"/>
</dbReference>
<dbReference type="SMART" id="SM01096">
    <property type="entry name" value="CPSase_L_D3"/>
    <property type="match status" value="1"/>
</dbReference>
<dbReference type="SMART" id="SM00851">
    <property type="entry name" value="MGS"/>
    <property type="match status" value="1"/>
</dbReference>
<dbReference type="SUPFAM" id="SSF48108">
    <property type="entry name" value="Carbamoyl phosphate synthetase, large subunit connection domain"/>
    <property type="match status" value="1"/>
</dbReference>
<dbReference type="SUPFAM" id="SSF56059">
    <property type="entry name" value="Glutathione synthetase ATP-binding domain-like"/>
    <property type="match status" value="2"/>
</dbReference>
<dbReference type="SUPFAM" id="SSF52335">
    <property type="entry name" value="Methylglyoxal synthase-like"/>
    <property type="match status" value="1"/>
</dbReference>
<dbReference type="SUPFAM" id="SSF52440">
    <property type="entry name" value="PreATP-grasp domain"/>
    <property type="match status" value="2"/>
</dbReference>
<dbReference type="PROSITE" id="PS50975">
    <property type="entry name" value="ATP_GRASP"/>
    <property type="match status" value="2"/>
</dbReference>
<dbReference type="PROSITE" id="PS00866">
    <property type="entry name" value="CPSASE_1"/>
    <property type="match status" value="2"/>
</dbReference>
<dbReference type="PROSITE" id="PS00867">
    <property type="entry name" value="CPSASE_2"/>
    <property type="match status" value="2"/>
</dbReference>
<dbReference type="PROSITE" id="PS51855">
    <property type="entry name" value="MGS"/>
    <property type="match status" value="1"/>
</dbReference>
<keyword id="KW-0028">Amino-acid biosynthesis</keyword>
<keyword id="KW-0055">Arginine biosynthesis</keyword>
<keyword id="KW-0067">ATP-binding</keyword>
<keyword id="KW-0963">Cytoplasm</keyword>
<keyword id="KW-0436">Ligase</keyword>
<keyword id="KW-0464">Manganese</keyword>
<keyword id="KW-0479">Metal-binding</keyword>
<keyword id="KW-0547">Nucleotide-binding</keyword>
<keyword id="KW-1185">Reference proteome</keyword>
<keyword id="KW-0677">Repeat</keyword>
<gene>
    <name type="primary">CPA2</name>
    <name type="ordered locus">ABR157W</name>
</gene>
<evidence type="ECO:0000250" key="1">
    <source>
        <dbReference type="UniProtKB" id="P00968"/>
    </source>
</evidence>
<evidence type="ECO:0000250" key="2">
    <source>
        <dbReference type="UniProtKB" id="P03965"/>
    </source>
</evidence>
<evidence type="ECO:0000255" key="3">
    <source>
        <dbReference type="PROSITE-ProRule" id="PRU00409"/>
    </source>
</evidence>
<evidence type="ECO:0000255" key="4">
    <source>
        <dbReference type="PROSITE-ProRule" id="PRU01202"/>
    </source>
</evidence>
<evidence type="ECO:0000305" key="5"/>
<sequence>MSTAGISDEASASAFTTAGYCPQLIKGIDSVLIIGSGGLSIGQAGEFDYSGSQAIKALKETGKRTILINPNIATNQTSYSLADEVYFLPVTPEFITHVIKRERPDGILLTFGGQTGLNCGVALQRAGTLEKYGVTVLGTPISVLETTEDRELFARALKEINMPIAESVACSTVEDAVAAANDIGYPVIVRSAYALGGLGSGFADDDLQLRQLCAQSLALSPQVLVEKSLKGWKEIEYEVVRDRVGNCITVCNMENFDPLGIHTGDSIVLAPSQTLSDEEFHMLRTAAIEIIRHLGVVGECNVQYALQPDGLAFKVIEVNARLSRSSALASKATGYPLAYTAAKIALGYTLPELPNPVTKSTVANFEPSLDYIVAKVPRWDLSKFQHVDKTIGSAMKSVGEVMAIGRNFEEAFQKAFRQVDPSLLGFQGSDEFADLDEALQFPTDRRWLAVGEALMNRGYSVERVHELTKIDRFFLHKCMNIVRMQKQLETLGSINRLDEVLLRKAKKLGFCDKQIARAISDDLSELDIRALRKSFGILPFVKRIDTMAAEVPAVTNYLYVTYNAVKDDVTFGDNGIMVLGSGVYRIGSSVEFDWCAVNTVQALRKEGHKTIMINYNPETVSTDFDEVDRLYFEELSFERVMDIYEAECASGCVISMGGQQPQNIASQLYEQGANILGTSPEDIDKAEDRHKFSTILDTLGLDQPRWSELKSLSEVKHFLDDVGYPVLVRPSYVLSGAAMSTVYNSEDLEGVFESAVAVSPEHPVVISKFIEGAQELDIDAVAYKGSLLVHAISEHVENAGVHSGDATLVLPPQSLKEEEKTRLKQLAAQVAAAWNITGPFNMQIIKTAEGGHTCLKIIECNIRASRSFPFVSKVLGVNFVEIAVKAFLGGDLVPPSCDLMARSYNYVATKCPQFSFTRLPGADPFLGVEMASVGEVAAFGSNALESYWVALQGLMSFCVPLPPSGILLGGDLSKEHLGRVAALLAPHGFTLLALSEATCEYLSRYLPAESSVTVLQMPETGREVRALFEQHNVQCVVNLAARRASSPIDPDYRIRRSAIDFAVPLFNEPQTTMLFARALSAYLPAELEMRQSDGPETPSYVLPWREYLGFKPT</sequence>
<accession>Q75D66</accession>
<comment type="function">
    <text evidence="2">Large subunit of the arginine-specific carbamoyl phosphate synthase (CPSase). CPSase catalyzes the formation of carbamoyl phosphate from the ammonia moiety of glutamine, hydrogencarbonate, and phosphate donated by ATP, constituting the first step of 2 biosynthetic pathways, one leading to arginine and/or urea and the other to pyrimidine nucleotides. The large subunit (synthetase) binds the substrates ammonia (free or transferred from glutamine from the small subunit), hydrogencarbonate and ATP and carries out an ATP-coupled ligase reaction, activating hydrogencarbonate by forming carboxy phosphate which reacts with ammonia to form carbamoyl phosphate.</text>
</comment>
<comment type="catalytic activity">
    <reaction evidence="2">
        <text>hydrogencarbonate + L-glutamine + 2 ATP + H2O = carbamoyl phosphate + L-glutamate + 2 ADP + phosphate + 2 H(+)</text>
        <dbReference type="Rhea" id="RHEA:18633"/>
        <dbReference type="ChEBI" id="CHEBI:15377"/>
        <dbReference type="ChEBI" id="CHEBI:15378"/>
        <dbReference type="ChEBI" id="CHEBI:17544"/>
        <dbReference type="ChEBI" id="CHEBI:29985"/>
        <dbReference type="ChEBI" id="CHEBI:30616"/>
        <dbReference type="ChEBI" id="CHEBI:43474"/>
        <dbReference type="ChEBI" id="CHEBI:58228"/>
        <dbReference type="ChEBI" id="CHEBI:58359"/>
        <dbReference type="ChEBI" id="CHEBI:456216"/>
        <dbReference type="EC" id="6.3.5.5"/>
    </reaction>
</comment>
<comment type="catalytic activity">
    <molecule>Carbamoyl phosphate synthase arginine-specific large chain</molecule>
    <reaction evidence="2">
        <text>hydrogencarbonate + NH4(+) + 2 ATP = carbamoyl phosphate + 2 ADP + phosphate + 2 H(+)</text>
        <dbReference type="Rhea" id="RHEA:18029"/>
        <dbReference type="ChEBI" id="CHEBI:15378"/>
        <dbReference type="ChEBI" id="CHEBI:17544"/>
        <dbReference type="ChEBI" id="CHEBI:28938"/>
        <dbReference type="ChEBI" id="CHEBI:30616"/>
        <dbReference type="ChEBI" id="CHEBI:43474"/>
        <dbReference type="ChEBI" id="CHEBI:58228"/>
        <dbReference type="ChEBI" id="CHEBI:456216"/>
        <dbReference type="EC" id="6.3.4.16"/>
    </reaction>
</comment>
<comment type="cofactor">
    <cofactor evidence="3">
        <name>Mg(2+)</name>
        <dbReference type="ChEBI" id="CHEBI:18420"/>
    </cofactor>
    <cofactor evidence="3">
        <name>Mn(2+)</name>
        <dbReference type="ChEBI" id="CHEBI:29035"/>
    </cofactor>
    <text evidence="3">Binds 4 Mg(2+) or Mn(2+) ions per subunit.</text>
</comment>
<comment type="pathway">
    <text evidence="2">Amino-acid biosynthesis; L-arginine biosynthesis; carbamoyl phosphate from bicarbonate: step 1/1.</text>
</comment>
<comment type="subunit">
    <text evidence="2">Heterodimer composed of 2 chains; the small (or glutamine) chain promotes the hydrolysis of glutamine to ammonia, which is used by the large (or ammonia) chain to synthesize carbamoyl phosphate.</text>
</comment>
<comment type="subcellular location">
    <subcellularLocation>
        <location evidence="2">Cytoplasm</location>
    </subcellularLocation>
</comment>
<comment type="domain">
    <text evidence="1">The large subunit is composed of 2 ATP-grasp domains that are involved in binding the 2 ATP molecules needed for carbamoyl phosphate synthesis. The N-terminal ATP-grasp domain (referred to as the carboxyphosphate synthetic component) catalyzes the ATP-dependent phosphorylation of hydrogencarbonate to carboxyphosphate and the subsequent nucleophilic attack by ammonia to form a carbamate intermediate. The C-terminal ATP-grasp domain (referred to as the carbamoyl phosphate synthetic component) then catalyzes the phosphorylation of carbamate with the second ATP to form the end product carbamoyl phosphate. The reactive and unstable enzyme intermediates are sequentially channeled from one active site to the next through the interior of the protein over a distance of at least 96 A.</text>
</comment>
<comment type="similarity">
    <text evidence="5">Belongs to the CarB family.</text>
</comment>
<protein>
    <recommendedName>
        <fullName evidence="5">Carbamoyl phosphate synthase arginine-specific large chain</fullName>
        <shortName>CPS</shortName>
        <shortName>CPSase</shortName>
        <ecNumber evidence="2">6.3.4.16</ecNumber>
        <ecNumber evidence="2">6.3.5.5</ecNumber>
    </recommendedName>
    <alternativeName>
        <fullName>Ammonium-dependent carbamoyl phosphate synthetase</fullName>
    </alternativeName>
    <alternativeName>
        <fullName>Arginine-specific carbamoyl phosphate synthetase, ammonia chain</fullName>
    </alternativeName>
    <alternativeName>
        <fullName>Glutamine-dependent carbamoyl phosphate synthetase</fullName>
    </alternativeName>
</protein>
<reference key="1">
    <citation type="journal article" date="2004" name="Science">
        <title>The Ashbya gossypii genome as a tool for mapping the ancient Saccharomyces cerevisiae genome.</title>
        <authorList>
            <person name="Dietrich F.S."/>
            <person name="Voegeli S."/>
            <person name="Brachat S."/>
            <person name="Lerch A."/>
            <person name="Gates K."/>
            <person name="Steiner S."/>
            <person name="Mohr C."/>
            <person name="Poehlmann R."/>
            <person name="Luedi P."/>
            <person name="Choi S."/>
            <person name="Wing R.A."/>
            <person name="Flavier A."/>
            <person name="Gaffney T.D."/>
            <person name="Philippsen P."/>
        </authorList>
    </citation>
    <scope>NUCLEOTIDE SEQUENCE [LARGE SCALE GENOMIC DNA]</scope>
    <source>
        <strain>ATCC 10895 / CBS 109.51 / FGSC 9923 / NRRL Y-1056</strain>
    </source>
</reference>
<reference key="2">
    <citation type="journal article" date="2013" name="G3 (Bethesda)">
        <title>Genomes of Ashbya fungi isolated from insects reveal four mating-type loci, numerous translocations, lack of transposons, and distinct gene duplications.</title>
        <authorList>
            <person name="Dietrich F.S."/>
            <person name="Voegeli S."/>
            <person name="Kuo S."/>
            <person name="Philippsen P."/>
        </authorList>
    </citation>
    <scope>GENOME REANNOTATION</scope>
    <scope>SEQUENCE REVISION TO 127</scope>
    <source>
        <strain>ATCC 10895 / CBS 109.51 / FGSC 9923 / NRRL Y-1056</strain>
    </source>
</reference>
<organism>
    <name type="scientific">Eremothecium gossypii (strain ATCC 10895 / CBS 109.51 / FGSC 9923 / NRRL Y-1056)</name>
    <name type="common">Yeast</name>
    <name type="synonym">Ashbya gossypii</name>
    <dbReference type="NCBI Taxonomy" id="284811"/>
    <lineage>
        <taxon>Eukaryota</taxon>
        <taxon>Fungi</taxon>
        <taxon>Dikarya</taxon>
        <taxon>Ascomycota</taxon>
        <taxon>Saccharomycotina</taxon>
        <taxon>Saccharomycetes</taxon>
        <taxon>Saccharomycetales</taxon>
        <taxon>Saccharomycetaceae</taxon>
        <taxon>Eremothecium</taxon>
    </lineage>
</organism>
<name>CARB_EREGS</name>
<feature type="chain" id="PRO_0000145088" description="Carbamoyl phosphate synthase arginine-specific large chain">
    <location>
        <begin position="1"/>
        <end position="1113"/>
    </location>
</feature>
<feature type="domain" description="ATP-grasp 1" evidence="3">
    <location>
        <begin position="154"/>
        <end position="346"/>
    </location>
</feature>
<feature type="domain" description="ATP-grasp 2" evidence="3">
    <location>
        <begin position="693"/>
        <end position="888"/>
    </location>
</feature>
<feature type="domain" description="MGS-like" evidence="4">
    <location>
        <begin position="957"/>
        <end position="1113"/>
    </location>
</feature>
<feature type="region of interest" description="Carboxyphosphate synthetic domain" evidence="1">
    <location>
        <begin position="23"/>
        <end position="420"/>
    </location>
</feature>
<feature type="region of interest" description="Oligomerization domain" evidence="1">
    <location>
        <begin position="421"/>
        <end position="568"/>
    </location>
</feature>
<feature type="region of interest" description="Carbamoyl phosphate synthetic domain" evidence="1">
    <location>
        <begin position="569"/>
        <end position="955"/>
    </location>
</feature>
<feature type="region of interest" description="Allosteric domain" evidence="1">
    <location>
        <begin position="956"/>
        <end position="1097"/>
    </location>
</feature>
<feature type="binding site" evidence="1">
    <location>
        <position position="150"/>
    </location>
    <ligand>
        <name>ATP</name>
        <dbReference type="ChEBI" id="CHEBI:30616"/>
        <label>1</label>
    </ligand>
</feature>
<feature type="binding site" evidence="1">
    <location>
        <position position="190"/>
    </location>
    <ligand>
        <name>ATP</name>
        <dbReference type="ChEBI" id="CHEBI:30616"/>
        <label>1</label>
    </ligand>
</feature>
<feature type="binding site" evidence="1">
    <location>
        <position position="196"/>
    </location>
    <ligand>
        <name>ATP</name>
        <dbReference type="ChEBI" id="CHEBI:30616"/>
        <label>1</label>
    </ligand>
</feature>
<feature type="binding site" evidence="1">
    <location>
        <position position="197"/>
    </location>
    <ligand>
        <name>ATP</name>
        <dbReference type="ChEBI" id="CHEBI:30616"/>
        <label>1</label>
    </ligand>
</feature>
<feature type="binding site" evidence="1">
    <location>
        <position position="227"/>
    </location>
    <ligand>
        <name>ATP</name>
        <dbReference type="ChEBI" id="CHEBI:30616"/>
        <label>1</label>
    </ligand>
</feature>
<feature type="binding site" evidence="1">
    <location>
        <position position="229"/>
    </location>
    <ligand>
        <name>ATP</name>
        <dbReference type="ChEBI" id="CHEBI:30616"/>
        <label>1</label>
    </ligand>
</feature>
<feature type="binding site" evidence="1">
    <location>
        <position position="234"/>
    </location>
    <ligand>
        <name>ATP</name>
        <dbReference type="ChEBI" id="CHEBI:30616"/>
        <label>1</label>
    </ligand>
</feature>
<feature type="binding site" evidence="1">
    <location>
        <position position="260"/>
    </location>
    <ligand>
        <name>ATP</name>
        <dbReference type="ChEBI" id="CHEBI:30616"/>
        <label>1</label>
    </ligand>
</feature>
<feature type="binding site" evidence="1">
    <location>
        <position position="261"/>
    </location>
    <ligand>
        <name>ATP</name>
        <dbReference type="ChEBI" id="CHEBI:30616"/>
        <label>1</label>
    </ligand>
</feature>
<feature type="binding site" evidence="1">
    <location>
        <position position="262"/>
    </location>
    <ligand>
        <name>ATP</name>
        <dbReference type="ChEBI" id="CHEBI:30616"/>
        <label>1</label>
    </ligand>
</feature>
<feature type="binding site" evidence="1">
    <location>
        <position position="303"/>
    </location>
    <ligand>
        <name>ATP</name>
        <dbReference type="ChEBI" id="CHEBI:30616"/>
        <label>1</label>
    </ligand>
</feature>
<feature type="binding site" evidence="3">
    <location>
        <position position="303"/>
    </location>
    <ligand>
        <name>Mg(2+)</name>
        <dbReference type="ChEBI" id="CHEBI:18420"/>
        <label>1</label>
    </ligand>
</feature>
<feature type="binding site" evidence="3">
    <location>
        <position position="303"/>
    </location>
    <ligand>
        <name>Mn(2+)</name>
        <dbReference type="ChEBI" id="CHEBI:29035"/>
        <label>1</label>
    </ligand>
</feature>
<feature type="binding site" evidence="1">
    <location>
        <position position="317"/>
    </location>
    <ligand>
        <name>ATP</name>
        <dbReference type="ChEBI" id="CHEBI:30616"/>
        <label>1</label>
    </ligand>
</feature>
<feature type="binding site" evidence="3">
    <location>
        <position position="317"/>
    </location>
    <ligand>
        <name>Mg(2+)</name>
        <dbReference type="ChEBI" id="CHEBI:18420"/>
        <label>1</label>
    </ligand>
</feature>
<feature type="binding site" evidence="3">
    <location>
        <position position="317"/>
    </location>
    <ligand>
        <name>Mg(2+)</name>
        <dbReference type="ChEBI" id="CHEBI:18420"/>
        <label>2</label>
    </ligand>
</feature>
<feature type="binding site" evidence="3">
    <location>
        <position position="317"/>
    </location>
    <ligand>
        <name>Mn(2+)</name>
        <dbReference type="ChEBI" id="CHEBI:29035"/>
        <label>1</label>
    </ligand>
</feature>
<feature type="binding site" evidence="3">
    <location>
        <position position="317"/>
    </location>
    <ligand>
        <name>Mn(2+)</name>
        <dbReference type="ChEBI" id="CHEBI:29035"/>
        <label>2</label>
    </ligand>
</feature>
<feature type="binding site" evidence="3">
    <location>
        <position position="319"/>
    </location>
    <ligand>
        <name>Mg(2+)</name>
        <dbReference type="ChEBI" id="CHEBI:18420"/>
        <label>2</label>
    </ligand>
</feature>
<feature type="binding site" evidence="3">
    <location>
        <position position="319"/>
    </location>
    <ligand>
        <name>Mn(2+)</name>
        <dbReference type="ChEBI" id="CHEBI:29035"/>
        <label>2</label>
    </ligand>
</feature>
<feature type="binding site" evidence="1">
    <location>
        <position position="729"/>
    </location>
    <ligand>
        <name>ATP</name>
        <dbReference type="ChEBI" id="CHEBI:30616"/>
        <label>2</label>
    </ligand>
</feature>
<feature type="binding site" evidence="1">
    <location>
        <position position="768"/>
    </location>
    <ligand>
        <name>ATP</name>
        <dbReference type="ChEBI" id="CHEBI:30616"/>
        <label>2</label>
    </ligand>
</feature>
<feature type="binding site" evidence="1">
    <location>
        <position position="770"/>
    </location>
    <ligand>
        <name>ATP</name>
        <dbReference type="ChEBI" id="CHEBI:30616"/>
        <label>2</label>
    </ligand>
</feature>
<feature type="binding site" evidence="1">
    <location>
        <position position="775"/>
    </location>
    <ligand>
        <name>ATP</name>
        <dbReference type="ChEBI" id="CHEBI:30616"/>
        <label>2</label>
    </ligand>
</feature>
<feature type="binding site" evidence="1">
    <location>
        <position position="800"/>
    </location>
    <ligand>
        <name>ATP</name>
        <dbReference type="ChEBI" id="CHEBI:30616"/>
        <label>2</label>
    </ligand>
</feature>
<feature type="binding site" evidence="1">
    <location>
        <position position="801"/>
    </location>
    <ligand>
        <name>ATP</name>
        <dbReference type="ChEBI" id="CHEBI:30616"/>
        <label>2</label>
    </ligand>
</feature>
<feature type="binding site" evidence="1">
    <location>
        <position position="802"/>
    </location>
    <ligand>
        <name>ATP</name>
        <dbReference type="ChEBI" id="CHEBI:30616"/>
        <label>2</label>
    </ligand>
</feature>
<feature type="binding site" evidence="1">
    <location>
        <position position="803"/>
    </location>
    <ligand>
        <name>ATP</name>
        <dbReference type="ChEBI" id="CHEBI:30616"/>
        <label>2</label>
    </ligand>
</feature>
<feature type="binding site" evidence="1">
    <location>
        <position position="843"/>
    </location>
    <ligand>
        <name>ATP</name>
        <dbReference type="ChEBI" id="CHEBI:30616"/>
        <label>2</label>
    </ligand>
</feature>
<feature type="binding site" evidence="3">
    <location>
        <position position="843"/>
    </location>
    <ligand>
        <name>Mg(2+)</name>
        <dbReference type="ChEBI" id="CHEBI:18420"/>
        <label>3</label>
    </ligand>
</feature>
<feature type="binding site" evidence="3">
    <location>
        <position position="843"/>
    </location>
    <ligand>
        <name>Mn(2+)</name>
        <dbReference type="ChEBI" id="CHEBI:29035"/>
        <label>3</label>
    </ligand>
</feature>
<feature type="binding site" evidence="1">
    <location>
        <position position="859"/>
    </location>
    <ligand>
        <name>ATP</name>
        <dbReference type="ChEBI" id="CHEBI:30616"/>
        <label>2</label>
    </ligand>
</feature>
<feature type="binding site" evidence="3">
    <location>
        <position position="859"/>
    </location>
    <ligand>
        <name>Mg(2+)</name>
        <dbReference type="ChEBI" id="CHEBI:18420"/>
        <label>3</label>
    </ligand>
</feature>
<feature type="binding site" evidence="3">
    <location>
        <position position="859"/>
    </location>
    <ligand>
        <name>Mg(2+)</name>
        <dbReference type="ChEBI" id="CHEBI:18420"/>
        <label>4</label>
    </ligand>
</feature>
<feature type="binding site" evidence="3">
    <location>
        <position position="859"/>
    </location>
    <ligand>
        <name>Mn(2+)</name>
        <dbReference type="ChEBI" id="CHEBI:29035"/>
        <label>3</label>
    </ligand>
</feature>
<feature type="binding site" evidence="3">
    <location>
        <position position="859"/>
    </location>
    <ligand>
        <name>Mn(2+)</name>
        <dbReference type="ChEBI" id="CHEBI:29035"/>
        <label>4</label>
    </ligand>
</feature>
<feature type="binding site" evidence="3">
    <location>
        <position position="861"/>
    </location>
    <ligand>
        <name>Mg(2+)</name>
        <dbReference type="ChEBI" id="CHEBI:18420"/>
        <label>4</label>
    </ligand>
</feature>
<feature type="binding site" evidence="3">
    <location>
        <position position="861"/>
    </location>
    <ligand>
        <name>Mn(2+)</name>
        <dbReference type="ChEBI" id="CHEBI:29035"/>
        <label>4</label>
    </ligand>
</feature>
<proteinExistence type="inferred from homology"/>